<feature type="chain" id="PRO_0000135703" description="Succinate-acetate/proton symporter SatP">
    <location>
        <begin position="1"/>
        <end position="188"/>
    </location>
</feature>
<feature type="topological domain" description="Cytoplasmic" evidence="1">
    <location>
        <begin position="1"/>
        <end position="13"/>
    </location>
</feature>
<feature type="transmembrane region" description="Helical" evidence="1">
    <location>
        <begin position="14"/>
        <end position="34"/>
    </location>
</feature>
<feature type="topological domain" description="Periplasmic" evidence="1">
    <location>
        <position position="35"/>
    </location>
</feature>
<feature type="transmembrane region" description="Helical" evidence="1">
    <location>
        <begin position="36"/>
        <end position="56"/>
    </location>
</feature>
<feature type="topological domain" description="Cytoplasmic" evidence="1">
    <location>
        <begin position="57"/>
        <end position="63"/>
    </location>
</feature>
<feature type="transmembrane region" description="Helical" evidence="1">
    <location>
        <begin position="64"/>
        <end position="84"/>
    </location>
</feature>
<feature type="topological domain" description="Periplasmic" evidence="1">
    <location>
        <begin position="85"/>
        <end position="97"/>
    </location>
</feature>
<feature type="transmembrane region" description="Helical" evidence="1">
    <location>
        <begin position="98"/>
        <end position="118"/>
    </location>
</feature>
<feature type="topological domain" description="Cytoplasmic" evidence="1">
    <location>
        <begin position="119"/>
        <end position="122"/>
    </location>
</feature>
<feature type="transmembrane region" description="Helical" evidence="1">
    <location>
        <begin position="123"/>
        <end position="143"/>
    </location>
</feature>
<feature type="topological domain" description="Periplasmic" evidence="1">
    <location>
        <begin position="144"/>
        <end position="148"/>
    </location>
</feature>
<feature type="transmembrane region" description="Helical" evidence="1">
    <location>
        <begin position="149"/>
        <end position="169"/>
    </location>
</feature>
<feature type="topological domain" description="Cytoplasmic" evidence="1">
    <location>
        <begin position="170"/>
        <end position="188"/>
    </location>
</feature>
<feature type="mutagenesis site" description="Acquires ability to transport lactic acid." evidence="3">
    <original>L</original>
    <variation>V</variation>
    <location>
        <position position="131"/>
    </location>
</feature>
<feature type="mutagenesis site" description="Acquires ability to transport lactic acid." evidence="3">
    <original>A</original>
    <variation>G</variation>
    <location>
        <position position="164"/>
    </location>
</feature>
<feature type="helix" evidence="5">
    <location>
        <begin position="10"/>
        <end position="28"/>
    </location>
</feature>
<feature type="helix" evidence="5">
    <location>
        <begin position="36"/>
        <end position="44"/>
    </location>
</feature>
<feature type="turn" evidence="5">
    <location>
        <begin position="45"/>
        <end position="47"/>
    </location>
</feature>
<feature type="helix" evidence="5">
    <location>
        <begin position="48"/>
        <end position="56"/>
    </location>
</feature>
<feature type="turn" evidence="5">
    <location>
        <begin position="57"/>
        <end position="61"/>
    </location>
</feature>
<feature type="helix" evidence="5">
    <location>
        <begin position="63"/>
        <end position="84"/>
    </location>
</feature>
<feature type="turn" evidence="5">
    <location>
        <begin position="85"/>
        <end position="89"/>
    </location>
</feature>
<feature type="helix" evidence="5">
    <location>
        <begin position="96"/>
        <end position="115"/>
    </location>
</feature>
<feature type="strand" evidence="5">
    <location>
        <begin position="118"/>
        <end position="120"/>
    </location>
</feature>
<feature type="helix" evidence="5">
    <location>
        <begin position="122"/>
        <end position="144"/>
    </location>
</feature>
<feature type="helix" evidence="5">
    <location>
        <begin position="147"/>
        <end position="177"/>
    </location>
</feature>
<dbReference type="EMBL" id="X67700">
    <property type="protein sequence ID" value="CAA47931.1"/>
    <property type="molecule type" value="Genomic_DNA"/>
</dbReference>
<dbReference type="EMBL" id="U00096">
    <property type="protein sequence ID" value="AAC73121.1"/>
    <property type="molecule type" value="Genomic_DNA"/>
</dbReference>
<dbReference type="EMBL" id="AP009048">
    <property type="protein sequence ID" value="BAB96588.2"/>
    <property type="molecule type" value="Genomic_DNA"/>
</dbReference>
<dbReference type="PIR" id="E56688">
    <property type="entry name" value="E56688"/>
</dbReference>
<dbReference type="RefSeq" id="NP_414551.1">
    <property type="nucleotide sequence ID" value="NC_000913.3"/>
</dbReference>
<dbReference type="RefSeq" id="WP_000528538.1">
    <property type="nucleotide sequence ID" value="NZ_STEB01000033.1"/>
</dbReference>
<dbReference type="PDB" id="5ZUG">
    <property type="method" value="X-ray"/>
    <property type="resolution" value="2.80 A"/>
    <property type="chains" value="A/B/C/D/E/F=1-188"/>
</dbReference>
<dbReference type="PDBsum" id="5ZUG"/>
<dbReference type="SMR" id="P0AC98"/>
<dbReference type="FunCoup" id="P0AC98">
    <property type="interactions" value="229"/>
</dbReference>
<dbReference type="STRING" id="511145.b0010"/>
<dbReference type="TCDB" id="2.A.96.1.1">
    <property type="family name" value="the acetate uptake transporter (acetr) family"/>
</dbReference>
<dbReference type="PaxDb" id="511145-b0010"/>
<dbReference type="EnsemblBacteria" id="AAC73121">
    <property type="protein sequence ID" value="AAC73121"/>
    <property type="gene ID" value="b0010"/>
</dbReference>
<dbReference type="GeneID" id="93777432"/>
<dbReference type="GeneID" id="944792"/>
<dbReference type="KEGG" id="ecj:JW0009"/>
<dbReference type="KEGG" id="eco:b0010"/>
<dbReference type="KEGG" id="ecoc:C3026_00055"/>
<dbReference type="PATRIC" id="fig|511145.12.peg.9"/>
<dbReference type="EchoBASE" id="EB1474"/>
<dbReference type="eggNOG" id="COG1584">
    <property type="taxonomic scope" value="Bacteria"/>
</dbReference>
<dbReference type="HOGENOM" id="CLU_051062_3_0_6"/>
<dbReference type="InParanoid" id="P0AC98"/>
<dbReference type="OMA" id="WKKGNTF"/>
<dbReference type="OrthoDB" id="9787939at2"/>
<dbReference type="PhylomeDB" id="P0AC98"/>
<dbReference type="BioCyc" id="EcoCyc:EG11512-MONOMER"/>
<dbReference type="BioCyc" id="MetaCyc:EG11512-MONOMER"/>
<dbReference type="PHI-base" id="PHI:9230"/>
<dbReference type="PRO" id="PR:P0AC98"/>
<dbReference type="Proteomes" id="UP000000625">
    <property type="component" value="Chromosome"/>
</dbReference>
<dbReference type="GO" id="GO:0005886">
    <property type="term" value="C:plasma membrane"/>
    <property type="evidence" value="ECO:0000314"/>
    <property type="project" value="EcoCyc"/>
</dbReference>
<dbReference type="GO" id="GO:0015360">
    <property type="term" value="F:acetate:proton symporter activity"/>
    <property type="evidence" value="ECO:0000314"/>
    <property type="project" value="EcoCyc"/>
</dbReference>
<dbReference type="GO" id="GO:0035433">
    <property type="term" value="P:acetate transmembrane transport"/>
    <property type="evidence" value="ECO:0000315"/>
    <property type="project" value="EcoCyc"/>
</dbReference>
<dbReference type="GO" id="GO:0071422">
    <property type="term" value="P:succinate transmembrane transport"/>
    <property type="evidence" value="ECO:0000314"/>
    <property type="project" value="EcoCyc"/>
</dbReference>
<dbReference type="InterPro" id="IPR000791">
    <property type="entry name" value="Gpr1/Fun34/SatP-like"/>
</dbReference>
<dbReference type="InterPro" id="IPR047622">
    <property type="entry name" value="GPR1_FUN34_YAAH"/>
</dbReference>
<dbReference type="InterPro" id="IPR047623">
    <property type="entry name" value="SatP"/>
</dbReference>
<dbReference type="NCBIfam" id="NF038013">
    <property type="entry name" value="AceTr_1"/>
    <property type="match status" value="1"/>
</dbReference>
<dbReference type="NCBIfam" id="NF007941">
    <property type="entry name" value="PRK10659.1"/>
    <property type="match status" value="1"/>
</dbReference>
<dbReference type="PANTHER" id="PTHR30178">
    <property type="entry name" value="INNER MEMBRANE PROTEIN YAAH"/>
    <property type="match status" value="1"/>
</dbReference>
<dbReference type="PANTHER" id="PTHR30178:SF3">
    <property type="entry name" value="SUCCINATE-ACETATE_PROTON SYMPORTER SATP"/>
    <property type="match status" value="1"/>
</dbReference>
<dbReference type="Pfam" id="PF01184">
    <property type="entry name" value="Gpr1_Fun34_YaaH"/>
    <property type="match status" value="1"/>
</dbReference>
<dbReference type="PROSITE" id="PS01114">
    <property type="entry name" value="GPR1_FUN34_YAAH"/>
    <property type="match status" value="1"/>
</dbReference>
<organism>
    <name type="scientific">Escherichia coli (strain K12)</name>
    <dbReference type="NCBI Taxonomy" id="83333"/>
    <lineage>
        <taxon>Bacteria</taxon>
        <taxon>Pseudomonadati</taxon>
        <taxon>Pseudomonadota</taxon>
        <taxon>Gammaproteobacteria</taxon>
        <taxon>Enterobacterales</taxon>
        <taxon>Enterobacteriaceae</taxon>
        <taxon>Escherichia</taxon>
    </lineage>
</organism>
<reference key="1">
    <citation type="journal article" date="1993" name="DNA Seq.">
        <title>Five open reading frames upstream of the dnaK gene of E. coli.</title>
        <authorList>
            <person name="James R."/>
            <person name="Dean D.O."/>
            <person name="Debbage J."/>
        </authorList>
    </citation>
    <scope>NUCLEOTIDE SEQUENCE [GENOMIC DNA]</scope>
</reference>
<reference key="2">
    <citation type="journal article" date="1992" name="Nucleic Acids Res.">
        <title>Systematic sequencing of the Escherichia coli genome: analysis of the 0-2.4 min region.</title>
        <authorList>
            <person name="Yura T."/>
            <person name="Mori H."/>
            <person name="Nagai H."/>
            <person name="Nagata T."/>
            <person name="Ishihama A."/>
            <person name="Fujita N."/>
            <person name="Isono K."/>
            <person name="Mizobuchi K."/>
            <person name="Nakata A."/>
        </authorList>
    </citation>
    <scope>NUCLEOTIDE SEQUENCE [LARGE SCALE GENOMIC DNA]</scope>
    <source>
        <strain>K12</strain>
    </source>
</reference>
<reference key="3">
    <citation type="journal article" date="1997" name="Science">
        <title>The complete genome sequence of Escherichia coli K-12.</title>
        <authorList>
            <person name="Blattner F.R."/>
            <person name="Plunkett G. III"/>
            <person name="Bloch C.A."/>
            <person name="Perna N.T."/>
            <person name="Burland V."/>
            <person name="Riley M."/>
            <person name="Collado-Vides J."/>
            <person name="Glasner J.D."/>
            <person name="Rode C.K."/>
            <person name="Mayhew G.F."/>
            <person name="Gregor J."/>
            <person name="Davis N.W."/>
            <person name="Kirkpatrick H.A."/>
            <person name="Goeden M.A."/>
            <person name="Rose D.J."/>
            <person name="Mau B."/>
            <person name="Shao Y."/>
        </authorList>
    </citation>
    <scope>NUCLEOTIDE SEQUENCE [LARGE SCALE GENOMIC DNA]</scope>
    <source>
        <strain>K12 / MG1655 / ATCC 47076</strain>
    </source>
</reference>
<reference key="4">
    <citation type="journal article" date="2006" name="Mol. Syst. Biol.">
        <title>Highly accurate genome sequences of Escherichia coli K-12 strains MG1655 and W3110.</title>
        <authorList>
            <person name="Hayashi K."/>
            <person name="Morooka N."/>
            <person name="Yamamoto Y."/>
            <person name="Fujita K."/>
            <person name="Isono K."/>
            <person name="Choi S."/>
            <person name="Ohtsubo E."/>
            <person name="Baba T."/>
            <person name="Wanner B.L."/>
            <person name="Mori H."/>
            <person name="Horiuchi T."/>
        </authorList>
    </citation>
    <scope>NUCLEOTIDE SEQUENCE [LARGE SCALE GENOMIC DNA]</scope>
    <scope>SEQUENCE REVISION TO 111</scope>
    <source>
        <strain>K12 / W3110 / ATCC 27325 / DSM 5911</strain>
    </source>
</reference>
<reference key="5">
    <citation type="journal article" date="2005" name="Science">
        <title>Global topology analysis of the Escherichia coli inner membrane proteome.</title>
        <authorList>
            <person name="Daley D.O."/>
            <person name="Rapp M."/>
            <person name="Granseth E."/>
            <person name="Melen K."/>
            <person name="Drew D."/>
            <person name="von Heijne G."/>
        </authorList>
    </citation>
    <scope>TOPOLOGY [LARGE SCALE ANALYSIS]</scope>
    <scope>SUBCELLULAR LOCATION</scope>
    <source>
        <strain>K12 / MG1655 / ATCC 47076</strain>
    </source>
</reference>
<reference key="6">
    <citation type="journal article" date="2013" name="Biochem. J.">
        <title>SATP (YaaH), a succinate-acetate transporter protein in Escherichia coli.</title>
        <authorList>
            <person name="Sa-Pessoa J."/>
            <person name="Paiva S."/>
            <person name="Ribas D."/>
            <person name="Silva I.J."/>
            <person name="Viegas S.C."/>
            <person name="Arraiano C.M."/>
            <person name="Casal M."/>
        </authorList>
    </citation>
    <scope>FUNCTION</scope>
    <scope>ACTIVITY REGULATION</scope>
    <scope>BIOPHYSICOCHEMICAL PROPERTIES</scope>
    <scope>DISRUPTION PHENOTYPE</scope>
    <scope>GENE NAME</scope>
    <scope>MUTAGENESIS OF LEU-131 AND ALA-164</scope>
    <source>
        <strain>K12 / MG1693</strain>
    </source>
</reference>
<accession>P0AC98</accession>
<accession>P28695</accession>
<accession>Q8KMY2</accession>
<name>SATP_ECOLI</name>
<gene>
    <name type="primary">satP</name>
    <name type="synonym">yaaH</name>
    <name type="ordered locus">b0010</name>
    <name type="ordered locus">JW0009</name>
</gene>
<proteinExistence type="evidence at protein level"/>
<keyword id="KW-0002">3D-structure</keyword>
<keyword id="KW-0997">Cell inner membrane</keyword>
<keyword id="KW-1003">Cell membrane</keyword>
<keyword id="KW-0406">Ion transport</keyword>
<keyword id="KW-0472">Membrane</keyword>
<keyword id="KW-1185">Reference proteome</keyword>
<keyword id="KW-0769">Symport</keyword>
<keyword id="KW-0812">Transmembrane</keyword>
<keyword id="KW-1133">Transmembrane helix</keyword>
<keyword id="KW-0813">Transport</keyword>
<evidence type="ECO:0000255" key="1"/>
<evidence type="ECO:0000269" key="2">
    <source>
    </source>
</evidence>
<evidence type="ECO:0000269" key="3">
    <source>
    </source>
</evidence>
<evidence type="ECO:0000305" key="4"/>
<evidence type="ECO:0007829" key="5">
    <source>
        <dbReference type="PDB" id="5ZUG"/>
    </source>
</evidence>
<protein>
    <recommendedName>
        <fullName>Succinate-acetate/proton symporter SatP</fullName>
    </recommendedName>
    <alternativeName>
        <fullName>Succinate-acetate transporter protein</fullName>
    </alternativeName>
</protein>
<sequence>MGNTKLANPAPLGLMGFGMTTILLNLHNVGYFALDGIILAMGIFYGGIAQIFAGLLEYKKGNTFGLTAFTSYGSFWLTLVAILLMPKLGLTDAPNAQFLGVYLGLWGVFTLFMFFGTLKGARVLQFVFFSLTVLFALLAIGNIAGNAAIIHFAGWIGLICGASAIYLAMGEVLNEQFGRTVLPIGESH</sequence>
<comment type="function">
    <text evidence="3">Uptake of acetate and succinate. Transport is energetically dependent on the protonmotive force.</text>
</comment>
<comment type="activity regulation">
    <text evidence="3">Transport is inhibited by the protonophore CCCP.</text>
</comment>
<comment type="biophysicochemical properties">
    <kinetics>
        <KM evidence="3">1.24 mM for acetic acid</KM>
        <KM evidence="3">1.18 mM for succinic acid</KM>
        <Vmax evidence="3">8.72 nmol/min/mg enzyme with acetic acid as substrate</Vmax>
        <Vmax evidence="3">10.05 nmol/min/mg enzyme with succinic acid as substrate</Vmax>
    </kinetics>
    <phDependence>
        <text evidence="3">Optimum pH is 6.0.</text>
    </phDependence>
</comment>
<comment type="subcellular location">
    <subcellularLocation>
        <location evidence="2">Cell inner membrane</location>
        <topology evidence="2">Multi-pass membrane protein</topology>
    </subcellularLocation>
</comment>
<comment type="disruption phenotype">
    <text evidence="3">Mutant shows a partial reduction in acetate uptake.</text>
</comment>
<comment type="similarity">
    <text evidence="4">Belongs to the acetate uptake transporter (AceTr) (TC 2.A.96) family.</text>
</comment>